<keyword id="KW-1185">Reference proteome</keyword>
<gene>
    <name evidence="1" type="primary">yhbP</name>
    <name type="ordered locus">ECS88_3538</name>
</gene>
<proteinExistence type="inferred from homology"/>
<evidence type="ECO:0000255" key="1">
    <source>
        <dbReference type="HAMAP-Rule" id="MF_00764"/>
    </source>
</evidence>
<dbReference type="EMBL" id="CU928161">
    <property type="protein sequence ID" value="CAR04766.1"/>
    <property type="molecule type" value="Genomic_DNA"/>
</dbReference>
<dbReference type="RefSeq" id="WP_000449450.1">
    <property type="nucleotide sequence ID" value="NC_011742.1"/>
</dbReference>
<dbReference type="SMR" id="B7MB75"/>
<dbReference type="KEGG" id="ecz:ECS88_3538"/>
<dbReference type="HOGENOM" id="CLU_105087_3_0_6"/>
<dbReference type="Proteomes" id="UP000000747">
    <property type="component" value="Chromosome"/>
</dbReference>
<dbReference type="FunFam" id="2.30.110.10:FF:000003">
    <property type="entry name" value="UPF0306 protein YhbP"/>
    <property type="match status" value="1"/>
</dbReference>
<dbReference type="Gene3D" id="2.30.110.10">
    <property type="entry name" value="Electron Transport, Fmn-binding Protein, Chain A"/>
    <property type="match status" value="1"/>
</dbReference>
<dbReference type="HAMAP" id="MF_00764">
    <property type="entry name" value="UPF0306"/>
    <property type="match status" value="1"/>
</dbReference>
<dbReference type="InterPro" id="IPR012349">
    <property type="entry name" value="Split_barrel_FMN-bd"/>
</dbReference>
<dbReference type="InterPro" id="IPR011194">
    <property type="entry name" value="UPF0306"/>
</dbReference>
<dbReference type="NCBIfam" id="NF002900">
    <property type="entry name" value="PRK03467.1"/>
    <property type="match status" value="1"/>
</dbReference>
<dbReference type="PIRSF" id="PIRSF009554">
    <property type="entry name" value="UCP009554"/>
    <property type="match status" value="1"/>
</dbReference>
<dbReference type="SUPFAM" id="SSF50475">
    <property type="entry name" value="FMN-binding split barrel"/>
    <property type="match status" value="1"/>
</dbReference>
<accession>B7MB75</accession>
<sequence length="147" mass="16777">METLTAISRWLAKQHVVTWCVQQEGELWCANAFYLFDAQKVAFYILTEEKTRHAQMSGPQAAIAGTVNGQPKTVALIRGVQFKGEIRRLEGEESDLARKAYNRRFPVARMLSAPVWEIRLDEIKFTDNTLGFGKKMIWLRNSGTEQA</sequence>
<name>YHBP_ECO45</name>
<feature type="chain" id="PRO_1000198356" description="UPF0306 protein YhbP">
    <location>
        <begin position="1"/>
        <end position="147"/>
    </location>
</feature>
<reference key="1">
    <citation type="journal article" date="2009" name="PLoS Genet.">
        <title>Organised genome dynamics in the Escherichia coli species results in highly diverse adaptive paths.</title>
        <authorList>
            <person name="Touchon M."/>
            <person name="Hoede C."/>
            <person name="Tenaillon O."/>
            <person name="Barbe V."/>
            <person name="Baeriswyl S."/>
            <person name="Bidet P."/>
            <person name="Bingen E."/>
            <person name="Bonacorsi S."/>
            <person name="Bouchier C."/>
            <person name="Bouvet O."/>
            <person name="Calteau A."/>
            <person name="Chiapello H."/>
            <person name="Clermont O."/>
            <person name="Cruveiller S."/>
            <person name="Danchin A."/>
            <person name="Diard M."/>
            <person name="Dossat C."/>
            <person name="Karoui M.E."/>
            <person name="Frapy E."/>
            <person name="Garry L."/>
            <person name="Ghigo J.M."/>
            <person name="Gilles A.M."/>
            <person name="Johnson J."/>
            <person name="Le Bouguenec C."/>
            <person name="Lescat M."/>
            <person name="Mangenot S."/>
            <person name="Martinez-Jehanne V."/>
            <person name="Matic I."/>
            <person name="Nassif X."/>
            <person name="Oztas S."/>
            <person name="Petit M.A."/>
            <person name="Pichon C."/>
            <person name="Rouy Z."/>
            <person name="Ruf C.S."/>
            <person name="Schneider D."/>
            <person name="Tourret J."/>
            <person name="Vacherie B."/>
            <person name="Vallenet D."/>
            <person name="Medigue C."/>
            <person name="Rocha E.P.C."/>
            <person name="Denamur E."/>
        </authorList>
    </citation>
    <scope>NUCLEOTIDE SEQUENCE [LARGE SCALE GENOMIC DNA]</scope>
    <source>
        <strain>S88 / ExPEC</strain>
    </source>
</reference>
<comment type="similarity">
    <text evidence="1">Belongs to the UPF0306 family.</text>
</comment>
<organism>
    <name type="scientific">Escherichia coli O45:K1 (strain S88 / ExPEC)</name>
    <dbReference type="NCBI Taxonomy" id="585035"/>
    <lineage>
        <taxon>Bacteria</taxon>
        <taxon>Pseudomonadati</taxon>
        <taxon>Pseudomonadota</taxon>
        <taxon>Gammaproteobacteria</taxon>
        <taxon>Enterobacterales</taxon>
        <taxon>Enterobacteriaceae</taxon>
        <taxon>Escherichia</taxon>
    </lineage>
</organism>
<protein>
    <recommendedName>
        <fullName evidence="1">UPF0306 protein YhbP</fullName>
    </recommendedName>
</protein>